<proteinExistence type="inferred from homology"/>
<comment type="similarity">
    <text evidence="1">Belongs to the bacterial ribosomal protein bL28 family.</text>
</comment>
<accession>B1I2D5</accession>
<name>RL28_DESAP</name>
<keyword id="KW-1185">Reference proteome</keyword>
<keyword id="KW-0687">Ribonucleoprotein</keyword>
<keyword id="KW-0689">Ribosomal protein</keyword>
<reference key="1">
    <citation type="submission" date="2007-10" db="EMBL/GenBank/DDBJ databases">
        <title>Complete sequence of chromosome of Desulforudis audaxviator MP104C.</title>
        <authorList>
            <person name="Copeland A."/>
            <person name="Lucas S."/>
            <person name="Lapidus A."/>
            <person name="Barry K."/>
            <person name="Glavina del Rio T."/>
            <person name="Dalin E."/>
            <person name="Tice H."/>
            <person name="Bruce D."/>
            <person name="Pitluck S."/>
            <person name="Lowry S.R."/>
            <person name="Larimer F."/>
            <person name="Land M.L."/>
            <person name="Hauser L."/>
            <person name="Kyrpides N."/>
            <person name="Ivanova N.N."/>
            <person name="Richardson P."/>
        </authorList>
    </citation>
    <scope>NUCLEOTIDE SEQUENCE [LARGE SCALE GENOMIC DNA]</scope>
    <source>
        <strain>MP104C</strain>
    </source>
</reference>
<sequence length="63" mass="7198">MAKKCDLCGKGVVVGMKLSHSHIRTKRTWEPNLQRVRALVDGKPRRIRVCTRCLRSGRVIRAV</sequence>
<protein>
    <recommendedName>
        <fullName evidence="1">Large ribosomal subunit protein bL28</fullName>
    </recommendedName>
    <alternativeName>
        <fullName evidence="2">50S ribosomal protein L28</fullName>
    </alternativeName>
</protein>
<dbReference type="EMBL" id="CP000860">
    <property type="protein sequence ID" value="ACA59161.1"/>
    <property type="molecule type" value="Genomic_DNA"/>
</dbReference>
<dbReference type="RefSeq" id="WP_012301749.1">
    <property type="nucleotide sequence ID" value="NC_010424.1"/>
</dbReference>
<dbReference type="SMR" id="B1I2D5"/>
<dbReference type="STRING" id="477974.Daud_0627"/>
<dbReference type="KEGG" id="dau:Daud_0627"/>
<dbReference type="eggNOG" id="COG0227">
    <property type="taxonomic scope" value="Bacteria"/>
</dbReference>
<dbReference type="HOGENOM" id="CLU_064548_7_0_9"/>
<dbReference type="OrthoDB" id="9805609at2"/>
<dbReference type="Proteomes" id="UP000008544">
    <property type="component" value="Chromosome"/>
</dbReference>
<dbReference type="GO" id="GO:1990904">
    <property type="term" value="C:ribonucleoprotein complex"/>
    <property type="evidence" value="ECO:0007669"/>
    <property type="project" value="UniProtKB-KW"/>
</dbReference>
<dbReference type="GO" id="GO:0005840">
    <property type="term" value="C:ribosome"/>
    <property type="evidence" value="ECO:0007669"/>
    <property type="project" value="UniProtKB-KW"/>
</dbReference>
<dbReference type="GO" id="GO:0003735">
    <property type="term" value="F:structural constituent of ribosome"/>
    <property type="evidence" value="ECO:0007669"/>
    <property type="project" value="InterPro"/>
</dbReference>
<dbReference type="GO" id="GO:0006412">
    <property type="term" value="P:translation"/>
    <property type="evidence" value="ECO:0007669"/>
    <property type="project" value="UniProtKB-UniRule"/>
</dbReference>
<dbReference type="Gene3D" id="2.30.170.40">
    <property type="entry name" value="Ribosomal protein L28/L24"/>
    <property type="match status" value="1"/>
</dbReference>
<dbReference type="HAMAP" id="MF_00373">
    <property type="entry name" value="Ribosomal_bL28"/>
    <property type="match status" value="1"/>
</dbReference>
<dbReference type="InterPro" id="IPR050096">
    <property type="entry name" value="Bacterial_rp_bL28"/>
</dbReference>
<dbReference type="InterPro" id="IPR026569">
    <property type="entry name" value="Ribosomal_bL28"/>
</dbReference>
<dbReference type="InterPro" id="IPR034704">
    <property type="entry name" value="Ribosomal_bL28/bL31-like_sf"/>
</dbReference>
<dbReference type="InterPro" id="IPR001383">
    <property type="entry name" value="Ribosomal_bL28_bact-type"/>
</dbReference>
<dbReference type="InterPro" id="IPR037147">
    <property type="entry name" value="Ribosomal_bL28_sf"/>
</dbReference>
<dbReference type="NCBIfam" id="TIGR00009">
    <property type="entry name" value="L28"/>
    <property type="match status" value="1"/>
</dbReference>
<dbReference type="PANTHER" id="PTHR39080">
    <property type="entry name" value="50S RIBOSOMAL PROTEIN L28"/>
    <property type="match status" value="1"/>
</dbReference>
<dbReference type="PANTHER" id="PTHR39080:SF1">
    <property type="entry name" value="LARGE RIBOSOMAL SUBUNIT PROTEIN BL28A"/>
    <property type="match status" value="1"/>
</dbReference>
<dbReference type="Pfam" id="PF00830">
    <property type="entry name" value="Ribosomal_L28"/>
    <property type="match status" value="1"/>
</dbReference>
<dbReference type="SUPFAM" id="SSF143800">
    <property type="entry name" value="L28p-like"/>
    <property type="match status" value="1"/>
</dbReference>
<gene>
    <name evidence="1" type="primary">rpmB</name>
    <name type="ordered locus">Daud_0627</name>
</gene>
<organism>
    <name type="scientific">Desulforudis audaxviator (strain MP104C)</name>
    <dbReference type="NCBI Taxonomy" id="477974"/>
    <lineage>
        <taxon>Bacteria</taxon>
        <taxon>Bacillati</taxon>
        <taxon>Bacillota</taxon>
        <taxon>Clostridia</taxon>
        <taxon>Thermoanaerobacterales</taxon>
        <taxon>Candidatus Desulforudaceae</taxon>
        <taxon>Candidatus Desulforudis</taxon>
    </lineage>
</organism>
<feature type="chain" id="PRO_1000121620" description="Large ribosomal subunit protein bL28">
    <location>
        <begin position="1"/>
        <end position="63"/>
    </location>
</feature>
<evidence type="ECO:0000255" key="1">
    <source>
        <dbReference type="HAMAP-Rule" id="MF_00373"/>
    </source>
</evidence>
<evidence type="ECO:0000305" key="2"/>